<keyword id="KW-0002">3D-structure</keyword>
<keyword id="KW-0025">Alternative splicing</keyword>
<keyword id="KW-0963">Cytoplasm</keyword>
<keyword id="KW-1015">Disulfide bond</keyword>
<keyword id="KW-0256">Endoplasmic reticulum</keyword>
<keyword id="KW-0275">Fatty acid biosynthesis</keyword>
<keyword id="KW-0276">Fatty acid metabolism</keyword>
<keyword id="KW-0325">Glycoprotein</keyword>
<keyword id="KW-0333">Golgi apparatus</keyword>
<keyword id="KW-0413">Isomerase</keyword>
<keyword id="KW-0444">Lipid biosynthesis</keyword>
<keyword id="KW-0443">Lipid metabolism</keyword>
<keyword id="KW-0467">Mast cell degranulation</keyword>
<keyword id="KW-0472">Membrane</keyword>
<keyword id="KW-0539">Nucleus</keyword>
<keyword id="KW-0643">Prostaglandin biosynthesis</keyword>
<keyword id="KW-0644">Prostaglandin metabolism</keyword>
<keyword id="KW-0873">Pyrrolidone carboxylic acid</keyword>
<keyword id="KW-1185">Reference proteome</keyword>
<keyword id="KW-0964">Secreted</keyword>
<keyword id="KW-0732">Signal</keyword>
<keyword id="KW-0813">Transport</keyword>
<name>PTGDS_MOUSE</name>
<gene>
    <name type="primary">Ptgds</name>
</gene>
<sequence>MAALRMLWMGLVLLGLLGFPQTPAQGHDTVQPNFQQDKFLGRWYSAGLASNSSWFREKKAVLYMCKTVVAPSTEGGLNLTSTFLRKNQCETKIMVLQPAGAPGHYTYSSPHSGSIHSVSVVEANYDEYALLFSRGTKGPGQDFRMATLYSRTQTLKDELKEKFTTFSKAQGLTEEDIVFLPQPDKCIQE</sequence>
<evidence type="ECO:0000250" key="1"/>
<evidence type="ECO:0000250" key="2">
    <source>
        <dbReference type="UniProtKB" id="P22057"/>
    </source>
</evidence>
<evidence type="ECO:0000250" key="3">
    <source>
        <dbReference type="UniProtKB" id="P41222"/>
    </source>
</evidence>
<evidence type="ECO:0000269" key="4">
    <source>
    </source>
</evidence>
<evidence type="ECO:0000269" key="5">
    <source>
    </source>
</evidence>
<evidence type="ECO:0000269" key="6">
    <source>
    </source>
</evidence>
<evidence type="ECO:0000269" key="7">
    <source>
    </source>
</evidence>
<evidence type="ECO:0000269" key="8">
    <source>
    </source>
</evidence>
<evidence type="ECO:0000269" key="9">
    <source>
    </source>
</evidence>
<evidence type="ECO:0000269" key="10">
    <source>
    </source>
</evidence>
<evidence type="ECO:0000269" key="11">
    <source>
    </source>
</evidence>
<evidence type="ECO:0000269" key="12">
    <source>
    </source>
</evidence>
<evidence type="ECO:0000269" key="13">
    <source>
    </source>
</evidence>
<evidence type="ECO:0000269" key="14">
    <source>
    </source>
</evidence>
<evidence type="ECO:0000303" key="15">
    <source>
    </source>
</evidence>
<evidence type="ECO:0000305" key="16"/>
<evidence type="ECO:0007829" key="17">
    <source>
        <dbReference type="PDB" id="2CZT"/>
    </source>
</evidence>
<evidence type="ECO:0007829" key="18">
    <source>
        <dbReference type="PDB" id="2CZU"/>
    </source>
</evidence>
<evidence type="ECO:0007829" key="19">
    <source>
        <dbReference type="PDB" id="2E4J"/>
    </source>
</evidence>
<evidence type="ECO:0007829" key="20">
    <source>
        <dbReference type="PDB" id="2RQ0"/>
    </source>
</evidence>
<dbReference type="EC" id="5.3.99.2" evidence="9 10"/>
<dbReference type="EMBL" id="X89222">
    <property type="protein sequence ID" value="CAA61506.1"/>
    <property type="molecule type" value="mRNA"/>
</dbReference>
<dbReference type="EMBL" id="Y10138">
    <property type="protein sequence ID" value="CAA71226.1"/>
    <property type="molecule type" value="Genomic_DNA"/>
</dbReference>
<dbReference type="EMBL" id="AB006361">
    <property type="protein sequence ID" value="BAA21769.1"/>
    <property type="status" value="ALT_FRAME"/>
    <property type="molecule type" value="mRNA"/>
</dbReference>
<dbReference type="EMBL" id="D83329">
    <property type="protein sequence ID" value="BAA74461.1"/>
    <property type="molecule type" value="Genomic_DNA"/>
</dbReference>
<dbReference type="EMBL" id="AK131859">
    <property type="protein sequence ID" value="BAE20833.1"/>
    <property type="molecule type" value="mRNA"/>
</dbReference>
<dbReference type="EMBL" id="CH466542">
    <property type="protein sequence ID" value="EDL08250.1"/>
    <property type="molecule type" value="Genomic_DNA"/>
</dbReference>
<dbReference type="EMBL" id="CH466542">
    <property type="protein sequence ID" value="EDL08251.1"/>
    <property type="molecule type" value="Genomic_DNA"/>
</dbReference>
<dbReference type="EMBL" id="BC038083">
    <property type="protein sequence ID" value="AAH38083.1"/>
    <property type="molecule type" value="mRNA"/>
</dbReference>
<dbReference type="EMBL" id="BC043015">
    <property type="protein sequence ID" value="AAH43015.1"/>
    <property type="molecule type" value="mRNA"/>
</dbReference>
<dbReference type="CCDS" id="CCDS38074.1">
    <molecule id="O09114-1"/>
</dbReference>
<dbReference type="PIR" id="S57748">
    <property type="entry name" value="S57748"/>
</dbReference>
<dbReference type="RefSeq" id="NP_001407673.1">
    <molecule id="O09114-1"/>
    <property type="nucleotide sequence ID" value="NM_001420744.1"/>
</dbReference>
<dbReference type="RefSeq" id="NP_001407674.1">
    <molecule id="O09114-1"/>
    <property type="nucleotide sequence ID" value="NM_001420745.1"/>
</dbReference>
<dbReference type="RefSeq" id="NP_001407675.1">
    <molecule id="O09114-1"/>
    <property type="nucleotide sequence ID" value="NM_001420746.1"/>
</dbReference>
<dbReference type="RefSeq" id="NP_032989.2">
    <molecule id="O09114-1"/>
    <property type="nucleotide sequence ID" value="NM_008963.3"/>
</dbReference>
<dbReference type="RefSeq" id="XP_006497849.1">
    <property type="nucleotide sequence ID" value="XM_006497786.3"/>
</dbReference>
<dbReference type="RefSeq" id="XP_006497850.1">
    <property type="nucleotide sequence ID" value="XM_006497787.3"/>
</dbReference>
<dbReference type="PDB" id="2CZT">
    <property type="method" value="X-ray"/>
    <property type="resolution" value="2.00 A"/>
    <property type="chains" value="A=25-189"/>
</dbReference>
<dbReference type="PDB" id="2CZU">
    <property type="method" value="X-ray"/>
    <property type="resolution" value="2.10 A"/>
    <property type="chains" value="A/B=25-189"/>
</dbReference>
<dbReference type="PDB" id="2E4J">
    <property type="method" value="NMR"/>
    <property type="chains" value="A=25-189"/>
</dbReference>
<dbReference type="PDB" id="2KTD">
    <property type="method" value="NMR"/>
    <property type="chains" value="A=25-189"/>
</dbReference>
<dbReference type="PDB" id="2RQ0">
    <property type="method" value="NMR"/>
    <property type="chains" value="A=25-189"/>
</dbReference>
<dbReference type="PDBsum" id="2CZT"/>
<dbReference type="PDBsum" id="2CZU"/>
<dbReference type="PDBsum" id="2E4J"/>
<dbReference type="PDBsum" id="2KTD"/>
<dbReference type="PDBsum" id="2RQ0"/>
<dbReference type="BMRB" id="O09114"/>
<dbReference type="SMR" id="O09114"/>
<dbReference type="BioGRID" id="202453">
    <property type="interactions" value="14"/>
</dbReference>
<dbReference type="FunCoup" id="O09114">
    <property type="interactions" value="189"/>
</dbReference>
<dbReference type="STRING" id="10090.ENSMUSP00000015234"/>
<dbReference type="BindingDB" id="O09114"/>
<dbReference type="ChEMBL" id="CHEMBL4334"/>
<dbReference type="DrugCentral" id="O09114"/>
<dbReference type="GlyConnect" id="2617">
    <property type="glycosylation" value="11 N-Linked glycans (2 sites)"/>
</dbReference>
<dbReference type="GlyCosmos" id="O09114">
    <property type="glycosylation" value="2 sites, 11 glycans"/>
</dbReference>
<dbReference type="GlyGen" id="O09114">
    <property type="glycosylation" value="3 sites, 13 N-linked glycans (2 sites), 1 O-linked glycan (1 site)"/>
</dbReference>
<dbReference type="iPTMnet" id="O09114"/>
<dbReference type="PhosphoSitePlus" id="O09114"/>
<dbReference type="SwissPalm" id="O09114"/>
<dbReference type="PaxDb" id="10090-ENSMUSP00000015234"/>
<dbReference type="PeptideAtlas" id="O09114"/>
<dbReference type="ProteomicsDB" id="301897">
    <molecule id="O09114-1"/>
</dbReference>
<dbReference type="ProteomicsDB" id="301898">
    <molecule id="O09114-2"/>
</dbReference>
<dbReference type="DNASU" id="19215"/>
<dbReference type="Ensembl" id="ENSMUST00000015234.13">
    <molecule id="O09114-1"/>
    <property type="protein sequence ID" value="ENSMUSP00000015234.7"/>
    <property type="gene ID" value="ENSMUSG00000015090.14"/>
</dbReference>
<dbReference type="Ensembl" id="ENSMUST00000114251.8">
    <molecule id="O09114-1"/>
    <property type="protein sequence ID" value="ENSMUSP00000109889.2"/>
    <property type="gene ID" value="ENSMUSG00000015090.14"/>
</dbReference>
<dbReference type="Ensembl" id="ENSMUST00000114259.3">
    <molecule id="O09114-1"/>
    <property type="protein sequence ID" value="ENSMUSP00000109897.3"/>
    <property type="gene ID" value="ENSMUSG00000015090.14"/>
</dbReference>
<dbReference type="GeneID" id="19215"/>
<dbReference type="KEGG" id="mmu:19215"/>
<dbReference type="UCSC" id="uc008isf.1">
    <molecule id="O09114-1"/>
    <property type="organism name" value="mouse"/>
</dbReference>
<dbReference type="AGR" id="MGI:99261"/>
<dbReference type="CTD" id="5730"/>
<dbReference type="MGI" id="MGI:99261">
    <property type="gene designation" value="Ptgds"/>
</dbReference>
<dbReference type="VEuPathDB" id="HostDB:ENSMUSG00000015090"/>
<dbReference type="eggNOG" id="ENOG502S6GK">
    <property type="taxonomic scope" value="Eukaryota"/>
</dbReference>
<dbReference type="GeneTree" id="ENSGT01050000244868"/>
<dbReference type="HOGENOM" id="CLU_094061_1_1_1"/>
<dbReference type="InParanoid" id="O09114"/>
<dbReference type="OMA" id="QIWNNDN"/>
<dbReference type="OrthoDB" id="9048943at2759"/>
<dbReference type="PhylomeDB" id="O09114"/>
<dbReference type="TreeFam" id="TF336103"/>
<dbReference type="BRENDA" id="5.3.99.2">
    <property type="organism ID" value="3474"/>
</dbReference>
<dbReference type="Reactome" id="R-MMU-2162123">
    <property type="pathway name" value="Synthesis of Prostaglandins (PG) and Thromboxanes (TX)"/>
</dbReference>
<dbReference type="SABIO-RK" id="O09114"/>
<dbReference type="BioGRID-ORCS" id="19215">
    <property type="hits" value="1 hit in 62 CRISPR screens"/>
</dbReference>
<dbReference type="ChiTaRS" id="Ptgds">
    <property type="organism name" value="mouse"/>
</dbReference>
<dbReference type="EvolutionaryTrace" id="O09114"/>
<dbReference type="PRO" id="PR:O09114"/>
<dbReference type="Proteomes" id="UP000000589">
    <property type="component" value="Chromosome 2"/>
</dbReference>
<dbReference type="RNAct" id="O09114">
    <property type="molecule type" value="protein"/>
</dbReference>
<dbReference type="Bgee" id="ENSMUSG00000015090">
    <property type="expression patterns" value="Expressed in vestibular membrane of cochlear duct and 220 other cell types or tissues"/>
</dbReference>
<dbReference type="GO" id="GO:0005576">
    <property type="term" value="C:extracellular region"/>
    <property type="evidence" value="ECO:0000314"/>
    <property type="project" value="UniProtKB"/>
</dbReference>
<dbReference type="GO" id="GO:0005615">
    <property type="term" value="C:extracellular space"/>
    <property type="evidence" value="ECO:0007669"/>
    <property type="project" value="Ensembl"/>
</dbReference>
<dbReference type="GO" id="GO:0005794">
    <property type="term" value="C:Golgi apparatus"/>
    <property type="evidence" value="ECO:0000250"/>
    <property type="project" value="UniProtKB"/>
</dbReference>
<dbReference type="GO" id="GO:0031965">
    <property type="term" value="C:nuclear membrane"/>
    <property type="evidence" value="ECO:0007669"/>
    <property type="project" value="UniProtKB-SubCell"/>
</dbReference>
<dbReference type="GO" id="GO:0005654">
    <property type="term" value="C:nucleoplasm"/>
    <property type="evidence" value="ECO:0000304"/>
    <property type="project" value="Reactome"/>
</dbReference>
<dbReference type="GO" id="GO:0048471">
    <property type="term" value="C:perinuclear region of cytoplasm"/>
    <property type="evidence" value="ECO:0007669"/>
    <property type="project" value="UniProtKB-SubCell"/>
</dbReference>
<dbReference type="GO" id="GO:0005791">
    <property type="term" value="C:rough endoplasmic reticulum"/>
    <property type="evidence" value="ECO:0000250"/>
    <property type="project" value="UniProtKB"/>
</dbReference>
<dbReference type="GO" id="GO:0005504">
    <property type="term" value="F:fatty acid binding"/>
    <property type="evidence" value="ECO:0007669"/>
    <property type="project" value="Ensembl"/>
</dbReference>
<dbReference type="GO" id="GO:0004667">
    <property type="term" value="F:prostaglandin-D synthase activity"/>
    <property type="evidence" value="ECO:0000314"/>
    <property type="project" value="UniProtKB"/>
</dbReference>
<dbReference type="GO" id="GO:0005501">
    <property type="term" value="F:retinoid binding"/>
    <property type="evidence" value="ECO:0000314"/>
    <property type="project" value="UniProtKB"/>
</dbReference>
<dbReference type="GO" id="GO:0010467">
    <property type="term" value="P:gene expression"/>
    <property type="evidence" value="ECO:0000314"/>
    <property type="project" value="MGI"/>
</dbReference>
<dbReference type="GO" id="GO:0043303">
    <property type="term" value="P:mast cell degranulation"/>
    <property type="evidence" value="ECO:0007669"/>
    <property type="project" value="UniProtKB-KW"/>
</dbReference>
<dbReference type="GO" id="GO:2000255">
    <property type="term" value="P:negative regulation of male germ cell proliferation"/>
    <property type="evidence" value="ECO:0000316"/>
    <property type="project" value="MGI"/>
</dbReference>
<dbReference type="GO" id="GO:0001516">
    <property type="term" value="P:prostaglandin biosynthetic process"/>
    <property type="evidence" value="ECO:0000314"/>
    <property type="project" value="UniProtKB"/>
</dbReference>
<dbReference type="GO" id="GO:0045187">
    <property type="term" value="P:regulation of circadian sleep/wake cycle, sleep"/>
    <property type="evidence" value="ECO:0000314"/>
    <property type="project" value="UniProtKB"/>
</dbReference>
<dbReference type="GO" id="GO:0051384">
    <property type="term" value="P:response to glucocorticoid"/>
    <property type="evidence" value="ECO:0007669"/>
    <property type="project" value="Ensembl"/>
</dbReference>
<dbReference type="CDD" id="cd19419">
    <property type="entry name" value="lipocalin_L-PGDS"/>
    <property type="match status" value="1"/>
</dbReference>
<dbReference type="FunFam" id="2.40.128.20:FF:000010">
    <property type="entry name" value="Prostaglandin-H2 D-isomerase"/>
    <property type="match status" value="1"/>
</dbReference>
<dbReference type="Gene3D" id="2.40.128.20">
    <property type="match status" value="1"/>
</dbReference>
<dbReference type="InterPro" id="IPR012674">
    <property type="entry name" value="Calycin"/>
</dbReference>
<dbReference type="InterPro" id="IPR002345">
    <property type="entry name" value="Lipocalin"/>
</dbReference>
<dbReference type="InterPro" id="IPR022272">
    <property type="entry name" value="Lipocalin_CS"/>
</dbReference>
<dbReference type="InterPro" id="IPR000566">
    <property type="entry name" value="Lipocln_cytosolic_FA-bd_dom"/>
</dbReference>
<dbReference type="PANTHER" id="PTHR11430">
    <property type="entry name" value="LIPOCALIN"/>
    <property type="match status" value="1"/>
</dbReference>
<dbReference type="PANTHER" id="PTHR11430:SF86">
    <property type="entry name" value="PROSTAGLANDIN-H2 D-ISOMERASE"/>
    <property type="match status" value="1"/>
</dbReference>
<dbReference type="Pfam" id="PF00061">
    <property type="entry name" value="Lipocalin"/>
    <property type="match status" value="1"/>
</dbReference>
<dbReference type="PRINTS" id="PR00179">
    <property type="entry name" value="LIPOCALIN"/>
</dbReference>
<dbReference type="PRINTS" id="PR01254">
    <property type="entry name" value="PGNDSYNTHASE"/>
</dbReference>
<dbReference type="SUPFAM" id="SSF50814">
    <property type="entry name" value="Lipocalins"/>
    <property type="match status" value="1"/>
</dbReference>
<dbReference type="PROSITE" id="PS00213">
    <property type="entry name" value="LIPOCALIN"/>
    <property type="match status" value="1"/>
</dbReference>
<reference key="1">
    <citation type="journal article" date="1996" name="Dev. Dyn.">
        <title>Developmental expression of murine Beta-trace in embryos and adult animals suggests a function in maturation and maintenance of blood-tissue barriers.</title>
        <authorList>
            <person name="Hoffmann A."/>
            <person name="Baechner D."/>
            <person name="Betat N."/>
            <person name="Lauber J."/>
            <person name="Gross G."/>
        </authorList>
    </citation>
    <scope>NUCLEOTIDE SEQUENCE [MRNA] (ISOFORM 1)</scope>
    <scope>FUNCTION</scope>
    <scope>TISSUE SPECIFICITY</scope>
    <source>
        <strain>NMRI</strain>
        <tissue>Brain</tissue>
    </source>
</reference>
<reference key="2">
    <citation type="submission" date="1997-01" db="EMBL/GenBank/DDBJ databases">
        <authorList>
            <person name="Hoffmann A."/>
            <person name="Steinert P."/>
            <person name="Lauber J."/>
            <person name="Gross G."/>
        </authorList>
    </citation>
    <scope>NUCLEOTIDE SEQUENCE [GENOMIC DNA] (ISOFORM 1)</scope>
</reference>
<reference key="3">
    <citation type="submission" date="1997-08" db="EMBL/GenBank/DDBJ databases">
        <title>Isolation of putative prostaglandin D synthetase from mouse choroid plexus.</title>
        <authorList>
            <person name="Kita H."/>
            <person name="Kawamoto S."/>
            <person name="Okubo K."/>
            <person name="Matsubara K."/>
        </authorList>
    </citation>
    <scope>NUCLEOTIDE SEQUENCE [MRNA] (ISOFORM 1)</scope>
    <source>
        <strain>C57BL/6J</strain>
        <tissue>Brain</tissue>
    </source>
</reference>
<reference key="4">
    <citation type="journal article" date="1999" name="Proc. Natl. Acad. Sci. U.S.A.">
        <title>Lack of tactile pain (allodynia) in lipocalin-type prostaglandin D synthase-deficient mice.</title>
        <authorList>
            <person name="Eguchi N."/>
            <person name="Minami T."/>
            <person name="Shirafuji N."/>
            <person name="Kanaoka Y."/>
            <person name="Tanaka T."/>
            <person name="Nagata A."/>
            <person name="Yoshida N."/>
            <person name="Urade Y."/>
            <person name="Ito S."/>
            <person name="Hayaishi O."/>
        </authorList>
    </citation>
    <scope>NUCLEOTIDE SEQUENCE [GENOMIC DNA] (ISOFORM 1)</scope>
    <scope>FUNCTION</scope>
    <scope>TISSUE SPECIFICITY</scope>
    <source>
        <strain>129/Sv</strain>
        <tissue>Liver</tissue>
    </source>
</reference>
<reference key="5">
    <citation type="journal article" date="2005" name="Science">
        <title>The transcriptional landscape of the mammalian genome.</title>
        <authorList>
            <person name="Carninci P."/>
            <person name="Kasukawa T."/>
            <person name="Katayama S."/>
            <person name="Gough J."/>
            <person name="Frith M.C."/>
            <person name="Maeda N."/>
            <person name="Oyama R."/>
            <person name="Ravasi T."/>
            <person name="Lenhard B."/>
            <person name="Wells C."/>
            <person name="Kodzius R."/>
            <person name="Shimokawa K."/>
            <person name="Bajic V.B."/>
            <person name="Brenner S.E."/>
            <person name="Batalov S."/>
            <person name="Forrest A.R."/>
            <person name="Zavolan M."/>
            <person name="Davis M.J."/>
            <person name="Wilming L.G."/>
            <person name="Aidinis V."/>
            <person name="Allen J.E."/>
            <person name="Ambesi-Impiombato A."/>
            <person name="Apweiler R."/>
            <person name="Aturaliya R.N."/>
            <person name="Bailey T.L."/>
            <person name="Bansal M."/>
            <person name="Baxter L."/>
            <person name="Beisel K.W."/>
            <person name="Bersano T."/>
            <person name="Bono H."/>
            <person name="Chalk A.M."/>
            <person name="Chiu K.P."/>
            <person name="Choudhary V."/>
            <person name="Christoffels A."/>
            <person name="Clutterbuck D.R."/>
            <person name="Crowe M.L."/>
            <person name="Dalla E."/>
            <person name="Dalrymple B.P."/>
            <person name="de Bono B."/>
            <person name="Della Gatta G."/>
            <person name="di Bernardo D."/>
            <person name="Down T."/>
            <person name="Engstrom P."/>
            <person name="Fagiolini M."/>
            <person name="Faulkner G."/>
            <person name="Fletcher C.F."/>
            <person name="Fukushima T."/>
            <person name="Furuno M."/>
            <person name="Futaki S."/>
            <person name="Gariboldi M."/>
            <person name="Georgii-Hemming P."/>
            <person name="Gingeras T.R."/>
            <person name="Gojobori T."/>
            <person name="Green R.E."/>
            <person name="Gustincich S."/>
            <person name="Harbers M."/>
            <person name="Hayashi Y."/>
            <person name="Hensch T.K."/>
            <person name="Hirokawa N."/>
            <person name="Hill D."/>
            <person name="Huminiecki L."/>
            <person name="Iacono M."/>
            <person name="Ikeo K."/>
            <person name="Iwama A."/>
            <person name="Ishikawa T."/>
            <person name="Jakt M."/>
            <person name="Kanapin A."/>
            <person name="Katoh M."/>
            <person name="Kawasawa Y."/>
            <person name="Kelso J."/>
            <person name="Kitamura H."/>
            <person name="Kitano H."/>
            <person name="Kollias G."/>
            <person name="Krishnan S.P."/>
            <person name="Kruger A."/>
            <person name="Kummerfeld S.K."/>
            <person name="Kurochkin I.V."/>
            <person name="Lareau L.F."/>
            <person name="Lazarevic D."/>
            <person name="Lipovich L."/>
            <person name="Liu J."/>
            <person name="Liuni S."/>
            <person name="McWilliam S."/>
            <person name="Madan Babu M."/>
            <person name="Madera M."/>
            <person name="Marchionni L."/>
            <person name="Matsuda H."/>
            <person name="Matsuzawa S."/>
            <person name="Miki H."/>
            <person name="Mignone F."/>
            <person name="Miyake S."/>
            <person name="Morris K."/>
            <person name="Mottagui-Tabar S."/>
            <person name="Mulder N."/>
            <person name="Nakano N."/>
            <person name="Nakauchi H."/>
            <person name="Ng P."/>
            <person name="Nilsson R."/>
            <person name="Nishiguchi S."/>
            <person name="Nishikawa S."/>
            <person name="Nori F."/>
            <person name="Ohara O."/>
            <person name="Okazaki Y."/>
            <person name="Orlando V."/>
            <person name="Pang K.C."/>
            <person name="Pavan W.J."/>
            <person name="Pavesi G."/>
            <person name="Pesole G."/>
            <person name="Petrovsky N."/>
            <person name="Piazza S."/>
            <person name="Reed J."/>
            <person name="Reid J.F."/>
            <person name="Ring B.Z."/>
            <person name="Ringwald M."/>
            <person name="Rost B."/>
            <person name="Ruan Y."/>
            <person name="Salzberg S.L."/>
            <person name="Sandelin A."/>
            <person name="Schneider C."/>
            <person name="Schoenbach C."/>
            <person name="Sekiguchi K."/>
            <person name="Semple C.A."/>
            <person name="Seno S."/>
            <person name="Sessa L."/>
            <person name="Sheng Y."/>
            <person name="Shibata Y."/>
            <person name="Shimada H."/>
            <person name="Shimada K."/>
            <person name="Silva D."/>
            <person name="Sinclair B."/>
            <person name="Sperling S."/>
            <person name="Stupka E."/>
            <person name="Sugiura K."/>
            <person name="Sultana R."/>
            <person name="Takenaka Y."/>
            <person name="Taki K."/>
            <person name="Tammoja K."/>
            <person name="Tan S.L."/>
            <person name="Tang S."/>
            <person name="Taylor M.S."/>
            <person name="Tegner J."/>
            <person name="Teichmann S.A."/>
            <person name="Ueda H.R."/>
            <person name="van Nimwegen E."/>
            <person name="Verardo R."/>
            <person name="Wei C.L."/>
            <person name="Yagi K."/>
            <person name="Yamanishi H."/>
            <person name="Zabarovsky E."/>
            <person name="Zhu S."/>
            <person name="Zimmer A."/>
            <person name="Hide W."/>
            <person name="Bult C."/>
            <person name="Grimmond S.M."/>
            <person name="Teasdale R.D."/>
            <person name="Liu E.T."/>
            <person name="Brusic V."/>
            <person name="Quackenbush J."/>
            <person name="Wahlestedt C."/>
            <person name="Mattick J.S."/>
            <person name="Hume D.A."/>
            <person name="Kai C."/>
            <person name="Sasaki D."/>
            <person name="Tomaru Y."/>
            <person name="Fukuda S."/>
            <person name="Kanamori-Katayama M."/>
            <person name="Suzuki M."/>
            <person name="Aoki J."/>
            <person name="Arakawa T."/>
            <person name="Iida J."/>
            <person name="Imamura K."/>
            <person name="Itoh M."/>
            <person name="Kato T."/>
            <person name="Kawaji H."/>
            <person name="Kawagashira N."/>
            <person name="Kawashima T."/>
            <person name="Kojima M."/>
            <person name="Kondo S."/>
            <person name="Konno H."/>
            <person name="Nakano K."/>
            <person name="Ninomiya N."/>
            <person name="Nishio T."/>
            <person name="Okada M."/>
            <person name="Plessy C."/>
            <person name="Shibata K."/>
            <person name="Shiraki T."/>
            <person name="Suzuki S."/>
            <person name="Tagami M."/>
            <person name="Waki K."/>
            <person name="Watahiki A."/>
            <person name="Okamura-Oho Y."/>
            <person name="Suzuki H."/>
            <person name="Kawai J."/>
            <person name="Hayashizaki Y."/>
        </authorList>
    </citation>
    <scope>NUCLEOTIDE SEQUENCE [LARGE SCALE MRNA]</scope>
    <source>
        <strain>C57BL/6J</strain>
        <tissue>Small intestine</tissue>
    </source>
</reference>
<reference key="6">
    <citation type="submission" date="2005-07" db="EMBL/GenBank/DDBJ databases">
        <authorList>
            <person name="Mural R.J."/>
            <person name="Adams M.D."/>
            <person name="Myers E.W."/>
            <person name="Smith H.O."/>
            <person name="Venter J.C."/>
        </authorList>
    </citation>
    <scope>NUCLEOTIDE SEQUENCE [LARGE SCALE GENOMIC DNA]</scope>
</reference>
<reference key="7">
    <citation type="journal article" date="2004" name="Genome Res.">
        <title>The status, quality, and expansion of the NIH full-length cDNA project: the Mammalian Gene Collection (MGC).</title>
        <authorList>
            <consortium name="The MGC Project Team"/>
        </authorList>
    </citation>
    <scope>NUCLEOTIDE SEQUENCE [LARGE SCALE MRNA] (ISOFORM 2)</scope>
    <source>
        <tissue>Eye</tissue>
    </source>
</reference>
<reference key="8">
    <citation type="journal article" date="2000" name="Proc. Natl. Acad. Sci. U.S.A.">
        <title>Prostaglandin D synthase gene is involved in the regulation of non-rapid eye movement sleep.</title>
        <authorList>
            <person name="Pinzar E."/>
            <person name="Kanaoka Y."/>
            <person name="Inui T."/>
            <person name="Eguchi N."/>
            <person name="Urade Y."/>
            <person name="Hayaishi O."/>
        </authorList>
    </citation>
    <scope>FUNCTION</scope>
</reference>
<reference key="9">
    <citation type="journal article" date="2002" name="J. Immunol.">
        <title>Pronounced eosinophilic lung inflammation and Th2 cytokine release in human lipocalin-type prostaglandin D synthase transgenic mice.</title>
        <authorList>
            <person name="Fujitani Y."/>
            <person name="Kanaoka Y."/>
            <person name="Aritake K."/>
            <person name="Uodome N."/>
            <person name="Okazaki-Hatake K."/>
            <person name="Urade Y."/>
        </authorList>
    </citation>
    <scope>FUNCTION</scope>
    <scope>TISSUE SPECIFICITY</scope>
</reference>
<reference key="10">
    <citation type="journal article" date="2002" name="J. Neurosci.">
        <title>Perineuronal oligodendrocytes protect against neuronal apoptosis through the production of lipocalin-type prostaglandin D synthase in a genetic demyelinating model.</title>
        <authorList>
            <person name="Taniike M."/>
            <person name="Mohri I."/>
            <person name="Eguchi N."/>
            <person name="Beuckmann C.T."/>
            <person name="Suzuki K."/>
            <person name="Urade Y."/>
        </authorList>
    </citation>
    <scope>FUNCTION</scope>
</reference>
<reference key="11">
    <citation type="journal article" date="2000" name="J. Androl.">
        <title>Stage and region-specific localization of lipocalin-type prostaglandin D synthase in the adult murine testis and epididymis.</title>
        <authorList>
            <person name="Gerena R.L."/>
            <person name="Eguchi N."/>
            <person name="Urade Y."/>
            <person name="Killian G.J."/>
        </authorList>
    </citation>
    <scope>TISSUE SPECIFICITY</scope>
</reference>
<reference key="12">
    <citation type="journal article" date="2000" name="J. Neurochem.">
        <title>Dexamethasone induces lipocalin-type prostaglandin D synthase gene expression in mouse neuronal cells.</title>
        <authorList>
            <person name="Garcia-Fernandez L.F."/>
            <person name="Iniguez M.A."/>
            <person name="Eguchi N."/>
            <person name="Fresno M."/>
            <person name="Urade Y."/>
            <person name="Munoz A."/>
        </authorList>
    </citation>
    <scope>INDUCTION BY DEXAMETHASONE</scope>
</reference>
<reference key="13">
    <citation type="journal article" date="2010" name="Cell">
        <title>A tissue-specific atlas of mouse protein phosphorylation and expression.</title>
        <authorList>
            <person name="Huttlin E.L."/>
            <person name="Jedrychowski M.P."/>
            <person name="Elias J.E."/>
            <person name="Goswami T."/>
            <person name="Rad R."/>
            <person name="Beausoleil S.A."/>
            <person name="Villen J."/>
            <person name="Haas W."/>
            <person name="Sowa M.E."/>
            <person name="Gygi S.P."/>
        </authorList>
    </citation>
    <scope>IDENTIFICATION BY MASS SPECTROMETRY [LARGE SCALE ANALYSIS]</scope>
    <source>
        <tissue>Brain</tissue>
        <tissue>Kidney</tissue>
    </source>
</reference>
<reference key="14">
    <citation type="journal article" date="2013" name="Nat. Immunol.">
        <title>Mast cell maturation is driven via a group III phospholipase A2-prostaglandin D2-DP1 receptor paracrine axis.</title>
        <authorList>
            <person name="Taketomi Y."/>
            <person name="Ueno N."/>
            <person name="Kojima T."/>
            <person name="Sato H."/>
            <person name="Murase R."/>
            <person name="Yamamoto K."/>
            <person name="Tanaka S."/>
            <person name="Sakanaka M."/>
            <person name="Nakamura M."/>
            <person name="Nishito Y."/>
            <person name="Kawana M."/>
            <person name="Kambe N."/>
            <person name="Ikeda K."/>
            <person name="Taguchi R."/>
            <person name="Nakamizo S."/>
            <person name="Kabashima K."/>
            <person name="Gelb M.H."/>
            <person name="Arita M."/>
            <person name="Yokomizo T."/>
            <person name="Nakamura M."/>
            <person name="Watanabe K."/>
            <person name="Hirai H."/>
            <person name="Nakamura M."/>
            <person name="Okayama Y."/>
            <person name="Ra C."/>
            <person name="Aritake K."/>
            <person name="Urade Y."/>
            <person name="Morimoto K."/>
            <person name="Sugimoto Y."/>
            <person name="Shimizu T."/>
            <person name="Narumiya S."/>
            <person name="Hara S."/>
            <person name="Murakami M."/>
        </authorList>
    </citation>
    <scope>FUNCTION</scope>
    <scope>DISRUPTION PHENOTYPE</scope>
</reference>
<reference key="15">
    <citation type="submission" date="2006-10" db="PDB data bank">
        <title>Structural basis of multi-functional lipocalin-type prostaglandin D synthase.</title>
        <authorList>
            <consortium name="RIKEN structural genomics initiative (RSGI)"/>
        </authorList>
    </citation>
    <scope>X-RAY CRYSTALLOGRAPHY (2.0 ANGSTROMS) OF 24-189</scope>
</reference>
<reference key="16">
    <citation type="journal article" date="2007" name="J. Biol. Chem.">
        <title>NMR solution structure of lipocalin-type prostaglandin D synthase: evidence for partial overlapping of catalytic pocket and retinoic acid-binding pocket within the central cavity.</title>
        <authorList>
            <person name="Shimamoto S."/>
            <person name="Yoshida T."/>
            <person name="Inui T."/>
            <person name="Gohda K."/>
            <person name="Kobayashi Y."/>
            <person name="Fujimori K."/>
            <person name="Tsurumura T."/>
            <person name="Aritake K."/>
            <person name="Urade Y."/>
            <person name="Ohkubo T."/>
        </authorList>
    </citation>
    <scope>STRUCTURE BY NMR OF 25-189</scope>
    <scope>FUNCTION</scope>
    <scope>CATALYTIC ACTIVITY</scope>
    <scope>DOMAIN</scope>
</reference>
<reference key="17">
    <citation type="journal article" date="2009" name="J. Biol. Chem.">
        <title>Structural basis of the catalytic mechanism operating in open-closed conformers of lipocalin type prostaglandin D synthase.</title>
        <authorList>
            <person name="Kumasaka T."/>
            <person name="Aritake K."/>
            <person name="Ago H."/>
            <person name="Irikura D."/>
            <person name="Tsurumura T."/>
            <person name="Yamamoto M."/>
            <person name="Miyano M."/>
            <person name="Urade Y."/>
            <person name="Hayaishi O."/>
        </authorList>
    </citation>
    <scope>X-RAY CRYSTALLOGRAPHY (2.0 ANGSTROMS) OF 25-189 OF MUTANT ALA-65 IN COMPLEX WITH RETINOIC ACID</scope>
    <scope>FUNCTION</scope>
    <scope>CATALYTIC ACTIVITY</scope>
    <scope>MUTAGENESIS OF SER-45; CYS-65; THR-67 AND SER-81</scope>
    <scope>BIOPHYSICOCHEMICAL PROPERTIES</scope>
    <scope>DISULFIDE BOND</scope>
    <scope>DOMAIN</scope>
</reference>
<reference key="18">
    <citation type="journal article" date="2010" name="J. Struct. Biol.">
        <title>Structural analysis of lipocalin-type prostaglandin D synthase complexed with biliverdin by small-angle X-ray scattering and multi-dimensional NMR.</title>
        <authorList>
            <person name="Miyamoto Y."/>
            <person name="Nishimura S."/>
            <person name="Inoue K."/>
            <person name="Shimamoto S."/>
            <person name="Yoshida T."/>
            <person name="Fukuhara A."/>
            <person name="Yamada M."/>
            <person name="Urade Y."/>
            <person name="Yagi N."/>
            <person name="Ohkubo T."/>
            <person name="Inui T."/>
        </authorList>
    </citation>
    <scope>STRUCTURE BY NMR OF 25-189 IN COMPLEX WITH BILIVERDIN</scope>
    <scope>FUNCTION</scope>
    <scope>DOMAIN</scope>
</reference>
<organism>
    <name type="scientific">Mus musculus</name>
    <name type="common">Mouse</name>
    <dbReference type="NCBI Taxonomy" id="10090"/>
    <lineage>
        <taxon>Eukaryota</taxon>
        <taxon>Metazoa</taxon>
        <taxon>Chordata</taxon>
        <taxon>Craniata</taxon>
        <taxon>Vertebrata</taxon>
        <taxon>Euteleostomi</taxon>
        <taxon>Mammalia</taxon>
        <taxon>Eutheria</taxon>
        <taxon>Euarchontoglires</taxon>
        <taxon>Glires</taxon>
        <taxon>Rodentia</taxon>
        <taxon>Myomorpha</taxon>
        <taxon>Muroidea</taxon>
        <taxon>Muridae</taxon>
        <taxon>Murinae</taxon>
        <taxon>Mus</taxon>
        <taxon>Mus</taxon>
    </lineage>
</organism>
<protein>
    <recommendedName>
        <fullName>Prostaglandin-H2 D-isomerase</fullName>
        <ecNumber evidence="9 10">5.3.99.2</ecNumber>
    </recommendedName>
    <alternativeName>
        <fullName>Glutathione-independent PGD synthase</fullName>
    </alternativeName>
    <alternativeName>
        <fullName>Lipocalin-type prostaglandin-D synthase</fullName>
    </alternativeName>
    <alternativeName>
        <fullName>Prostaglandin-D2 synthase</fullName>
        <shortName>L-PGDS</shortName>
        <shortName>PGD2 synthase</shortName>
        <shortName>PGDS2</shortName>
    </alternativeName>
</protein>
<accession>O09114</accession>
<accession>O09157</accession>
<accession>O35091</accession>
<accession>Q3V2G5</accession>
<accession>Q62169</accession>
<proteinExistence type="evidence at protein level"/>
<feature type="signal peptide" evidence="3">
    <location>
        <begin position="1"/>
        <end position="24"/>
    </location>
</feature>
<feature type="chain" id="PRO_0000017947" description="Prostaglandin-H2 D-isomerase">
    <location>
        <begin position="25"/>
        <end position="189"/>
    </location>
</feature>
<feature type="active site" description="Nucleophile" evidence="10">
    <location>
        <position position="65"/>
    </location>
</feature>
<feature type="modified residue" description="Pyrrolidone carboxylic acid" evidence="2">
    <location>
        <position position="25"/>
    </location>
</feature>
<feature type="glycosylation site" description="N-linked (GlcNAc...) asparagine" evidence="1">
    <location>
        <position position="51"/>
    </location>
</feature>
<feature type="glycosylation site" description="N-linked (GlcNAc...) asparagine" evidence="1">
    <location>
        <position position="78"/>
    </location>
</feature>
<feature type="disulfide bond" evidence="10">
    <location>
        <begin position="89"/>
        <end position="186"/>
    </location>
</feature>
<feature type="splice variant" id="VSP_041029" description="In isoform 2." evidence="15">
    <location>
        <begin position="1"/>
        <end position="63"/>
    </location>
</feature>
<feature type="mutagenesis site" description="Reduces enzyme activity by about half. Reduces enzyme activity tenfold; when associated with A-67 and A-81." evidence="10">
    <original>S</original>
    <variation>A</variation>
    <location>
        <position position="45"/>
    </location>
</feature>
<feature type="mutagenesis site" description="Loss of enzyme activity. No effect on ligand binding." evidence="10">
    <original>C</original>
    <variation>A</variation>
    <location>
        <position position="65"/>
    </location>
</feature>
<feature type="mutagenesis site" description="Reduces enzyme activity by about half. Reduces enzyme activity tenfold; when associated with A-45 and A-81." evidence="10">
    <original>T</original>
    <variation>A</variation>
    <location>
        <position position="67"/>
    </location>
</feature>
<feature type="mutagenesis site" description="Slightly reduced enzyme activity. half. Reduces enzyme activity tenfold; when associated with A-45 and A-67." evidence="10">
    <original>S</original>
    <variation>A</variation>
    <location>
        <position position="81"/>
    </location>
</feature>
<feature type="strand" evidence="19">
    <location>
        <begin position="27"/>
        <end position="29"/>
    </location>
</feature>
<feature type="helix" evidence="17">
    <location>
        <begin position="36"/>
        <end position="39"/>
    </location>
</feature>
<feature type="strand" evidence="17">
    <location>
        <begin position="41"/>
        <end position="50"/>
    </location>
</feature>
<feature type="helix" evidence="17">
    <location>
        <begin position="55"/>
        <end position="58"/>
    </location>
</feature>
<feature type="turn" evidence="17">
    <location>
        <begin position="59"/>
        <end position="61"/>
    </location>
</feature>
<feature type="strand" evidence="17">
    <location>
        <begin position="66"/>
        <end position="71"/>
    </location>
</feature>
<feature type="strand" evidence="17">
    <location>
        <begin position="75"/>
        <end position="85"/>
    </location>
</feature>
<feature type="strand" evidence="17">
    <location>
        <begin position="89"/>
        <end position="98"/>
    </location>
</feature>
<feature type="strand" evidence="17">
    <location>
        <begin position="104"/>
        <end position="107"/>
    </location>
</feature>
<feature type="strand" evidence="17">
    <location>
        <begin position="110"/>
        <end position="113"/>
    </location>
</feature>
<feature type="strand" evidence="17">
    <location>
        <begin position="116"/>
        <end position="124"/>
    </location>
</feature>
<feature type="turn" evidence="17">
    <location>
        <begin position="125"/>
        <end position="127"/>
    </location>
</feature>
<feature type="strand" evidence="17">
    <location>
        <begin position="128"/>
        <end position="134"/>
    </location>
</feature>
<feature type="turn" evidence="20">
    <location>
        <begin position="137"/>
        <end position="140"/>
    </location>
</feature>
<feature type="strand" evidence="17">
    <location>
        <begin position="144"/>
        <end position="154"/>
    </location>
</feature>
<feature type="helix" evidence="17">
    <location>
        <begin position="157"/>
        <end position="169"/>
    </location>
</feature>
<feature type="helix" evidence="17">
    <location>
        <begin position="174"/>
        <end position="176"/>
    </location>
</feature>
<feature type="strand" evidence="17">
    <location>
        <begin position="177"/>
        <end position="179"/>
    </location>
</feature>
<feature type="strand" evidence="18">
    <location>
        <begin position="184"/>
        <end position="187"/>
    </location>
</feature>
<comment type="function">
    <text evidence="4 7 8 9 10 11 12 13 14">Catalyzes the conversion of PGH2 to PGD2, a prostaglandin involved in smooth muscle contraction/relaxation and a potent inhibitor of platelet aggregation. Involved in a variety of CNS functions, such as sedation, NREM sleep and PGE2-induced allodynia, and may have an anti-apoptotic role in oligodendrocytes. Binds small non-substrate lipophilic molecules, including biliverdin, bilirubin, retinal, retinoic acid and thyroid hormone, and may act as a scavenger for harmful hydrophobic molecules and as a secretory retinoid and thyroid hormone transporter. Possibly involved in development and maintenance of the blood-brain, blood-retina, blood-aqueous humor and blood-testis barrier. It is likely to play important roles in both maturation and maintenance of the central nervous system and male reproductive system (PubMed:10781097, PubMed:11751991, PubMed:12077186, PubMed:17715133, PubMed:19546224, PubMed:19833210, PubMed:8922532, PubMed:9892701). Involved in PLA2G3-dependent maturation of mast cells. PLA2G3 is secreted by immature mast cells and acts on nearby fibroblasts upstream to PTDGS to synthesize PGD2, which in turn promotes mast cell maturation and degranulation via PTGDR (PubMed:23624557).</text>
</comment>
<comment type="catalytic activity">
    <reaction evidence="9 10">
        <text>prostaglandin H2 = prostaglandin D2</text>
        <dbReference type="Rhea" id="RHEA:10600"/>
        <dbReference type="ChEBI" id="CHEBI:57405"/>
        <dbReference type="ChEBI" id="CHEBI:57406"/>
        <dbReference type="EC" id="5.3.99.2"/>
    </reaction>
</comment>
<comment type="biophysicochemical properties">
    <kinetics>
        <KM evidence="10">0.8 uM for prostaglandin H2</KM>
        <Vmax evidence="10">5.9 umol/min/mg enzyme</Vmax>
    </kinetics>
</comment>
<comment type="subunit">
    <text evidence="3">Monomer.</text>
</comment>
<comment type="subcellular location">
    <subcellularLocation>
        <location evidence="3">Rough endoplasmic reticulum</location>
    </subcellularLocation>
    <subcellularLocation>
        <location evidence="3">Nucleus membrane</location>
    </subcellularLocation>
    <subcellularLocation>
        <location evidence="3">Golgi apparatus</location>
    </subcellularLocation>
    <subcellularLocation>
        <location evidence="3">Cytoplasm</location>
        <location evidence="3">Perinuclear region</location>
    </subcellularLocation>
    <subcellularLocation>
        <location evidence="3">Secreted</location>
    </subcellularLocation>
    <text evidence="3">Detected on rough endoplasmic reticulum of arachnoid and menigioma cells. Localized to the nuclear envelope, Golgi apparatus, secretory vesicles and spherical cytoplasmic structures in arachnoid trabecular cells, and to circular cytoplasmic structures in meningeal macrophages and perivascular microglial cells. In oligodendrocytes, localized to the rough endoplasmic reticulum and nuclear envelope. In retinal pigment epithelial cells, localized to distinct cytoplasmic domains including the perinuclear region. Also secreted.</text>
</comment>
<comment type="alternative products">
    <event type="alternative splicing"/>
    <isoform>
        <id>O09114-1</id>
        <name>1</name>
        <sequence type="displayed"/>
    </isoform>
    <isoform>
        <id>O09114-2</id>
        <name>2</name>
        <sequence type="described" ref="VSP_041029"/>
    </isoform>
</comment>
<comment type="tissue specificity">
    <text evidence="6 7 13 14">Abundant in the brain and CNS, where it is expressed in tissues of the blood-brain barrier and secreted into the cerebro-spinal fluid. In the male reproductive system, it is expressed in the testis, efferent ducts and epididymis, and is secreted into the seminal fluid. In the eye, it is expressed in the pigmented epithelium of the retina and the nonpigmented epithelium of the ciliary body, and secreted into the aqueous humor. Low levels detected in various tissue fluids such as serum, normal urine, ascitic fluid and tear fluid. Also found in a number of other organs including the ear, heart and lung.</text>
</comment>
<comment type="developmental stage">
    <text>Initially detected at 14.5 dpc in the mesenchymal cells of the brain. Later in development, observed in the choroid plexus and within single cells in the brain.</text>
</comment>
<comment type="induction">
    <text evidence="5">By IL-1 beta and thyroid hormone. Probably induced by dexamethasone, dihydrotestosterone, progesterone, retinoic acid and retinal. Repressed by the Notch-Hes signaling pathway.</text>
</comment>
<comment type="domain">
    <text evidence="9 10 11">Forms a beta-barrel structure that accommodates hydrophobic ligands in its interior.</text>
</comment>
<comment type="disruption phenotype">
    <text evidence="12">Mutant mice show decreased susceptibility to passive cutaneous anaphylaxis associated with decreased mast cell degranulation.</text>
</comment>
<comment type="similarity">
    <text evidence="16">Belongs to the calycin superfamily. Lipocalin family.</text>
</comment>
<comment type="sequence caution" evidence="16">
    <conflict type="frameshift">
        <sequence resource="EMBL-CDS" id="BAA21769"/>
    </conflict>
</comment>